<dbReference type="EC" id="2.5.1.6" evidence="1"/>
<dbReference type="EMBL" id="CP000316">
    <property type="protein sequence ID" value="ABE42723.1"/>
    <property type="molecule type" value="Genomic_DNA"/>
</dbReference>
<dbReference type="RefSeq" id="WP_011481726.1">
    <property type="nucleotide sequence ID" value="NC_007948.1"/>
</dbReference>
<dbReference type="SMR" id="Q12FG9"/>
<dbReference type="STRING" id="296591.Bpro_0767"/>
<dbReference type="KEGG" id="pol:Bpro_0767"/>
<dbReference type="eggNOG" id="COG0192">
    <property type="taxonomic scope" value="Bacteria"/>
</dbReference>
<dbReference type="HOGENOM" id="CLU_041802_1_1_4"/>
<dbReference type="OrthoDB" id="9801686at2"/>
<dbReference type="UniPathway" id="UPA00315">
    <property type="reaction ID" value="UER00080"/>
</dbReference>
<dbReference type="Proteomes" id="UP000001983">
    <property type="component" value="Chromosome"/>
</dbReference>
<dbReference type="GO" id="GO:0005737">
    <property type="term" value="C:cytoplasm"/>
    <property type="evidence" value="ECO:0007669"/>
    <property type="project" value="UniProtKB-SubCell"/>
</dbReference>
<dbReference type="GO" id="GO:0005524">
    <property type="term" value="F:ATP binding"/>
    <property type="evidence" value="ECO:0007669"/>
    <property type="project" value="UniProtKB-UniRule"/>
</dbReference>
<dbReference type="GO" id="GO:0000287">
    <property type="term" value="F:magnesium ion binding"/>
    <property type="evidence" value="ECO:0007669"/>
    <property type="project" value="UniProtKB-UniRule"/>
</dbReference>
<dbReference type="GO" id="GO:0004478">
    <property type="term" value="F:methionine adenosyltransferase activity"/>
    <property type="evidence" value="ECO:0007669"/>
    <property type="project" value="UniProtKB-UniRule"/>
</dbReference>
<dbReference type="GO" id="GO:0006730">
    <property type="term" value="P:one-carbon metabolic process"/>
    <property type="evidence" value="ECO:0007669"/>
    <property type="project" value="UniProtKB-KW"/>
</dbReference>
<dbReference type="GO" id="GO:0006556">
    <property type="term" value="P:S-adenosylmethionine biosynthetic process"/>
    <property type="evidence" value="ECO:0007669"/>
    <property type="project" value="UniProtKB-UniRule"/>
</dbReference>
<dbReference type="CDD" id="cd18079">
    <property type="entry name" value="S-AdoMet_synt"/>
    <property type="match status" value="1"/>
</dbReference>
<dbReference type="FunFam" id="3.30.300.10:FF:000003">
    <property type="entry name" value="S-adenosylmethionine synthase"/>
    <property type="match status" value="1"/>
</dbReference>
<dbReference type="FunFam" id="3.30.300.10:FF:000004">
    <property type="entry name" value="S-adenosylmethionine synthase"/>
    <property type="match status" value="1"/>
</dbReference>
<dbReference type="FunFam" id="3.30.300.10:FF:000011">
    <property type="entry name" value="S-adenosylmethionine synthase"/>
    <property type="match status" value="1"/>
</dbReference>
<dbReference type="Gene3D" id="3.30.300.10">
    <property type="match status" value="3"/>
</dbReference>
<dbReference type="HAMAP" id="MF_00086">
    <property type="entry name" value="S_AdoMet_synth1"/>
    <property type="match status" value="1"/>
</dbReference>
<dbReference type="InterPro" id="IPR022631">
    <property type="entry name" value="ADOMET_SYNTHASE_CS"/>
</dbReference>
<dbReference type="InterPro" id="IPR022630">
    <property type="entry name" value="S-AdoMet_synt_C"/>
</dbReference>
<dbReference type="InterPro" id="IPR022629">
    <property type="entry name" value="S-AdoMet_synt_central"/>
</dbReference>
<dbReference type="InterPro" id="IPR022628">
    <property type="entry name" value="S-AdoMet_synt_N"/>
</dbReference>
<dbReference type="InterPro" id="IPR002133">
    <property type="entry name" value="S-AdoMet_synthetase"/>
</dbReference>
<dbReference type="InterPro" id="IPR022636">
    <property type="entry name" value="S-AdoMet_synthetase_sfam"/>
</dbReference>
<dbReference type="NCBIfam" id="TIGR01034">
    <property type="entry name" value="metK"/>
    <property type="match status" value="1"/>
</dbReference>
<dbReference type="PANTHER" id="PTHR11964">
    <property type="entry name" value="S-ADENOSYLMETHIONINE SYNTHETASE"/>
    <property type="match status" value="1"/>
</dbReference>
<dbReference type="Pfam" id="PF02773">
    <property type="entry name" value="S-AdoMet_synt_C"/>
    <property type="match status" value="1"/>
</dbReference>
<dbReference type="Pfam" id="PF02772">
    <property type="entry name" value="S-AdoMet_synt_M"/>
    <property type="match status" value="1"/>
</dbReference>
<dbReference type="Pfam" id="PF00438">
    <property type="entry name" value="S-AdoMet_synt_N"/>
    <property type="match status" value="1"/>
</dbReference>
<dbReference type="PIRSF" id="PIRSF000497">
    <property type="entry name" value="MAT"/>
    <property type="match status" value="1"/>
</dbReference>
<dbReference type="SUPFAM" id="SSF55973">
    <property type="entry name" value="S-adenosylmethionine synthetase"/>
    <property type="match status" value="3"/>
</dbReference>
<dbReference type="PROSITE" id="PS00376">
    <property type="entry name" value="ADOMET_SYNTHASE_1"/>
    <property type="match status" value="1"/>
</dbReference>
<dbReference type="PROSITE" id="PS00377">
    <property type="entry name" value="ADOMET_SYNTHASE_2"/>
    <property type="match status" value="1"/>
</dbReference>
<accession>Q12FG9</accession>
<gene>
    <name evidence="1" type="primary">metK</name>
    <name type="ordered locus">Bpro_0767</name>
</gene>
<comment type="function">
    <text evidence="1">Catalyzes the formation of S-adenosylmethionine (AdoMet) from methionine and ATP. The overall synthetic reaction is composed of two sequential steps, AdoMet formation and the subsequent tripolyphosphate hydrolysis which occurs prior to release of AdoMet from the enzyme.</text>
</comment>
<comment type="catalytic activity">
    <reaction evidence="1">
        <text>L-methionine + ATP + H2O = S-adenosyl-L-methionine + phosphate + diphosphate</text>
        <dbReference type="Rhea" id="RHEA:21080"/>
        <dbReference type="ChEBI" id="CHEBI:15377"/>
        <dbReference type="ChEBI" id="CHEBI:30616"/>
        <dbReference type="ChEBI" id="CHEBI:33019"/>
        <dbReference type="ChEBI" id="CHEBI:43474"/>
        <dbReference type="ChEBI" id="CHEBI:57844"/>
        <dbReference type="ChEBI" id="CHEBI:59789"/>
        <dbReference type="EC" id="2.5.1.6"/>
    </reaction>
</comment>
<comment type="cofactor">
    <cofactor evidence="1">
        <name>Mg(2+)</name>
        <dbReference type="ChEBI" id="CHEBI:18420"/>
    </cofactor>
    <text evidence="1">Binds 2 divalent ions per subunit.</text>
</comment>
<comment type="cofactor">
    <cofactor evidence="1">
        <name>K(+)</name>
        <dbReference type="ChEBI" id="CHEBI:29103"/>
    </cofactor>
    <text evidence="1">Binds 1 potassium ion per subunit.</text>
</comment>
<comment type="pathway">
    <text evidence="1">Amino-acid biosynthesis; S-adenosyl-L-methionine biosynthesis; S-adenosyl-L-methionine from L-methionine: step 1/1.</text>
</comment>
<comment type="subunit">
    <text evidence="1">Homotetramer; dimer of dimers.</text>
</comment>
<comment type="subcellular location">
    <subcellularLocation>
        <location evidence="1">Cytoplasm</location>
    </subcellularLocation>
</comment>
<comment type="similarity">
    <text evidence="1">Belongs to the AdoMet synthase family.</text>
</comment>
<feature type="chain" id="PRO_0000302957" description="S-adenosylmethionine synthase">
    <location>
        <begin position="1"/>
        <end position="393"/>
    </location>
</feature>
<feature type="region of interest" description="Flexible loop" evidence="1">
    <location>
        <begin position="100"/>
        <end position="110"/>
    </location>
</feature>
<feature type="binding site" description="in other chain" evidence="1">
    <location>
        <position position="16"/>
    </location>
    <ligand>
        <name>ATP</name>
        <dbReference type="ChEBI" id="CHEBI:30616"/>
        <note>ligand shared between two neighboring subunits</note>
    </ligand>
</feature>
<feature type="binding site" evidence="1">
    <location>
        <position position="18"/>
    </location>
    <ligand>
        <name>Mg(2+)</name>
        <dbReference type="ChEBI" id="CHEBI:18420"/>
    </ligand>
</feature>
<feature type="binding site" evidence="1">
    <location>
        <position position="44"/>
    </location>
    <ligand>
        <name>K(+)</name>
        <dbReference type="ChEBI" id="CHEBI:29103"/>
    </ligand>
</feature>
<feature type="binding site" description="in other chain" evidence="1">
    <location>
        <position position="57"/>
    </location>
    <ligand>
        <name>L-methionine</name>
        <dbReference type="ChEBI" id="CHEBI:57844"/>
        <note>ligand shared between two neighboring subunits</note>
    </ligand>
</feature>
<feature type="binding site" description="in other chain" evidence="1">
    <location>
        <position position="100"/>
    </location>
    <ligand>
        <name>L-methionine</name>
        <dbReference type="ChEBI" id="CHEBI:57844"/>
        <note>ligand shared between two neighboring subunits</note>
    </ligand>
</feature>
<feature type="binding site" description="in other chain" evidence="1">
    <location>
        <begin position="167"/>
        <end position="169"/>
    </location>
    <ligand>
        <name>ATP</name>
        <dbReference type="ChEBI" id="CHEBI:30616"/>
        <note>ligand shared between two neighboring subunits</note>
    </ligand>
</feature>
<feature type="binding site" description="in other chain" evidence="1">
    <location>
        <begin position="238"/>
        <end position="239"/>
    </location>
    <ligand>
        <name>ATP</name>
        <dbReference type="ChEBI" id="CHEBI:30616"/>
        <note>ligand shared between two neighboring subunits</note>
    </ligand>
</feature>
<feature type="binding site" evidence="1">
    <location>
        <position position="247"/>
    </location>
    <ligand>
        <name>ATP</name>
        <dbReference type="ChEBI" id="CHEBI:30616"/>
        <note>ligand shared between two neighboring subunits</note>
    </ligand>
</feature>
<feature type="binding site" evidence="1">
    <location>
        <position position="247"/>
    </location>
    <ligand>
        <name>L-methionine</name>
        <dbReference type="ChEBI" id="CHEBI:57844"/>
        <note>ligand shared between two neighboring subunits</note>
    </ligand>
</feature>
<feature type="binding site" description="in other chain" evidence="1">
    <location>
        <begin position="253"/>
        <end position="254"/>
    </location>
    <ligand>
        <name>ATP</name>
        <dbReference type="ChEBI" id="CHEBI:30616"/>
        <note>ligand shared between two neighboring subunits</note>
    </ligand>
</feature>
<feature type="binding site" evidence="1">
    <location>
        <position position="270"/>
    </location>
    <ligand>
        <name>ATP</name>
        <dbReference type="ChEBI" id="CHEBI:30616"/>
        <note>ligand shared between two neighboring subunits</note>
    </ligand>
</feature>
<feature type="binding site" evidence="1">
    <location>
        <position position="274"/>
    </location>
    <ligand>
        <name>ATP</name>
        <dbReference type="ChEBI" id="CHEBI:30616"/>
        <note>ligand shared between two neighboring subunits</note>
    </ligand>
</feature>
<feature type="binding site" description="in other chain" evidence="1">
    <location>
        <position position="278"/>
    </location>
    <ligand>
        <name>L-methionine</name>
        <dbReference type="ChEBI" id="CHEBI:57844"/>
        <note>ligand shared between two neighboring subunits</note>
    </ligand>
</feature>
<proteinExistence type="inferred from homology"/>
<protein>
    <recommendedName>
        <fullName evidence="1">S-adenosylmethionine synthase</fullName>
        <shortName evidence="1">AdoMet synthase</shortName>
        <ecNumber evidence="1">2.5.1.6</ecNumber>
    </recommendedName>
    <alternativeName>
        <fullName evidence="1">MAT</fullName>
    </alternativeName>
    <alternativeName>
        <fullName evidence="1">Methionine adenosyltransferase</fullName>
    </alternativeName>
</protein>
<sequence length="393" mass="43112">MANDFLFTSESVSEGHPDKVADQISDAILDAIFKQDPRSRVAAETLTNTGLVVLAGEITTNAHVDYIQVARDTIKRIGYDNTEYGIDYKGCAVLVAYDKQSNDIAQGVDHASDDHLNIGAGDQGLMFGYACDETPELMPAPIYYAHRLMERQAQLRKDGRLPFLRPDAKSQVTMRYVNGKPHSIDTVVLSTQHSPDQSETPHKMKASFTEAIIEEIIKPVLPKEWLKETKYLINPTGRFVIGGPQGDCGLTGRKIIVDTYGGACPHGGGAFSGKDPSKVDRSAAYAARYVAKNIVAAGLARQCQIQVAYAIGVARPMNVTVYTEGTGVISDEKLSALVHEHFDLRPKGIIQMLDLLRPIYEKTAAYGHFGRDEPEFSWERTDRAALLRAAAGR</sequence>
<organism>
    <name type="scientific">Polaromonas sp. (strain JS666 / ATCC BAA-500)</name>
    <dbReference type="NCBI Taxonomy" id="296591"/>
    <lineage>
        <taxon>Bacteria</taxon>
        <taxon>Pseudomonadati</taxon>
        <taxon>Pseudomonadota</taxon>
        <taxon>Betaproteobacteria</taxon>
        <taxon>Burkholderiales</taxon>
        <taxon>Comamonadaceae</taxon>
        <taxon>Polaromonas</taxon>
    </lineage>
</organism>
<evidence type="ECO:0000255" key="1">
    <source>
        <dbReference type="HAMAP-Rule" id="MF_00086"/>
    </source>
</evidence>
<keyword id="KW-0067">ATP-binding</keyword>
<keyword id="KW-0963">Cytoplasm</keyword>
<keyword id="KW-0460">Magnesium</keyword>
<keyword id="KW-0479">Metal-binding</keyword>
<keyword id="KW-0547">Nucleotide-binding</keyword>
<keyword id="KW-0554">One-carbon metabolism</keyword>
<keyword id="KW-0630">Potassium</keyword>
<keyword id="KW-1185">Reference proteome</keyword>
<keyword id="KW-0808">Transferase</keyword>
<reference key="1">
    <citation type="journal article" date="2008" name="Appl. Environ. Microbiol.">
        <title>The genome of Polaromonas sp. strain JS666: insights into the evolution of a hydrocarbon- and xenobiotic-degrading bacterium, and features of relevance to biotechnology.</title>
        <authorList>
            <person name="Mattes T.E."/>
            <person name="Alexander A.K."/>
            <person name="Richardson P.M."/>
            <person name="Munk A.C."/>
            <person name="Han C.S."/>
            <person name="Stothard P."/>
            <person name="Coleman N.V."/>
        </authorList>
    </citation>
    <scope>NUCLEOTIDE SEQUENCE [LARGE SCALE GENOMIC DNA]</scope>
    <source>
        <strain>JS666 / ATCC BAA-500</strain>
    </source>
</reference>
<name>METK_POLSJ</name>